<keyword id="KW-0067">ATP-binding</keyword>
<keyword id="KW-0347">Helicase</keyword>
<keyword id="KW-0378">Hydrolase</keyword>
<keyword id="KW-0547">Nucleotide-binding</keyword>
<keyword id="KW-0694">RNA-binding</keyword>
<keyword id="KW-0804">Transcription</keyword>
<keyword id="KW-0805">Transcription regulation</keyword>
<keyword id="KW-0806">Transcription termination</keyword>
<proteinExistence type="inferred from homology"/>
<reference key="1">
    <citation type="journal article" date="2009" name="Proc. Natl. Acad. Sci. U.S.A.">
        <title>Convergent evolution of metabolic roles in bacterial co-symbionts of insects.</title>
        <authorList>
            <person name="McCutcheon J.P."/>
            <person name="McDonald B.R."/>
            <person name="Moran N.A."/>
        </authorList>
    </citation>
    <scope>NUCLEOTIDE SEQUENCE [LARGE SCALE GENOMIC DNA]</scope>
    <source>
        <strain>SMDSEM</strain>
    </source>
</reference>
<gene>
    <name evidence="1" type="primary">rho</name>
    <name type="ordered locus">SMDSEM_012</name>
</gene>
<name>RHO_KARMS</name>
<evidence type="ECO:0000255" key="1">
    <source>
        <dbReference type="HAMAP-Rule" id="MF_01884"/>
    </source>
</evidence>
<evidence type="ECO:0000255" key="2">
    <source>
        <dbReference type="PROSITE-ProRule" id="PRU01203"/>
    </source>
</evidence>
<dbReference type="EC" id="3.6.4.-" evidence="1"/>
<dbReference type="EMBL" id="CP001605">
    <property type="protein sequence ID" value="ACU52745.1"/>
    <property type="molecule type" value="Genomic_DNA"/>
</dbReference>
<dbReference type="SMR" id="C7LJY3"/>
<dbReference type="STRING" id="595499.SMDSEM_012"/>
<dbReference type="KEGG" id="sms:SMDSEM_012"/>
<dbReference type="HOGENOM" id="CLU_016377_4_3_10"/>
<dbReference type="Proteomes" id="UP000008074">
    <property type="component" value="Chromosome"/>
</dbReference>
<dbReference type="GO" id="GO:0005524">
    <property type="term" value="F:ATP binding"/>
    <property type="evidence" value="ECO:0007669"/>
    <property type="project" value="UniProtKB-UniRule"/>
</dbReference>
<dbReference type="GO" id="GO:0016887">
    <property type="term" value="F:ATP hydrolysis activity"/>
    <property type="evidence" value="ECO:0007669"/>
    <property type="project" value="InterPro"/>
</dbReference>
<dbReference type="GO" id="GO:0008186">
    <property type="term" value="F:ATP-dependent activity, acting on RNA"/>
    <property type="evidence" value="ECO:0007669"/>
    <property type="project" value="InterPro"/>
</dbReference>
<dbReference type="GO" id="GO:0004386">
    <property type="term" value="F:helicase activity"/>
    <property type="evidence" value="ECO:0007669"/>
    <property type="project" value="UniProtKB-UniRule"/>
</dbReference>
<dbReference type="GO" id="GO:0003723">
    <property type="term" value="F:RNA binding"/>
    <property type="evidence" value="ECO:0007669"/>
    <property type="project" value="UniProtKB-UniRule"/>
</dbReference>
<dbReference type="GO" id="GO:0006353">
    <property type="term" value="P:DNA-templated transcription termination"/>
    <property type="evidence" value="ECO:0007669"/>
    <property type="project" value="UniProtKB-UniRule"/>
</dbReference>
<dbReference type="CDD" id="cd01128">
    <property type="entry name" value="rho_factor_C"/>
    <property type="match status" value="1"/>
</dbReference>
<dbReference type="Gene3D" id="2.40.50.140">
    <property type="entry name" value="Nucleic acid-binding proteins"/>
    <property type="match status" value="1"/>
</dbReference>
<dbReference type="Gene3D" id="3.40.50.300">
    <property type="entry name" value="P-loop containing nucleotide triphosphate hydrolases"/>
    <property type="match status" value="1"/>
</dbReference>
<dbReference type="HAMAP" id="MF_01884">
    <property type="entry name" value="Rho"/>
    <property type="match status" value="1"/>
</dbReference>
<dbReference type="InterPro" id="IPR003593">
    <property type="entry name" value="AAA+_ATPase"/>
</dbReference>
<dbReference type="InterPro" id="IPR000194">
    <property type="entry name" value="ATPase_F1/V1/A1_a/bsu_nucl-bd"/>
</dbReference>
<dbReference type="InterPro" id="IPR012340">
    <property type="entry name" value="NA-bd_OB-fold"/>
</dbReference>
<dbReference type="InterPro" id="IPR027417">
    <property type="entry name" value="P-loop_NTPase"/>
</dbReference>
<dbReference type="InterPro" id="IPR041703">
    <property type="entry name" value="Rho_factor_ATP-bd"/>
</dbReference>
<dbReference type="InterPro" id="IPR011113">
    <property type="entry name" value="Rho_RNA-bd"/>
</dbReference>
<dbReference type="InterPro" id="IPR004665">
    <property type="entry name" value="Term_rho"/>
</dbReference>
<dbReference type="NCBIfam" id="NF006886">
    <property type="entry name" value="PRK09376.1"/>
    <property type="match status" value="1"/>
</dbReference>
<dbReference type="NCBIfam" id="TIGR00767">
    <property type="entry name" value="rho"/>
    <property type="match status" value="1"/>
</dbReference>
<dbReference type="PANTHER" id="PTHR46425">
    <property type="entry name" value="TRANSCRIPTION TERMINATION FACTOR RHO"/>
    <property type="match status" value="1"/>
</dbReference>
<dbReference type="PANTHER" id="PTHR46425:SF1">
    <property type="entry name" value="TRANSCRIPTION TERMINATION FACTOR RHO"/>
    <property type="match status" value="1"/>
</dbReference>
<dbReference type="Pfam" id="PF00006">
    <property type="entry name" value="ATP-synt_ab"/>
    <property type="match status" value="1"/>
</dbReference>
<dbReference type="Pfam" id="PF07497">
    <property type="entry name" value="Rho_RNA_bind"/>
    <property type="match status" value="1"/>
</dbReference>
<dbReference type="SMART" id="SM00382">
    <property type="entry name" value="AAA"/>
    <property type="match status" value="1"/>
</dbReference>
<dbReference type="SUPFAM" id="SSF50249">
    <property type="entry name" value="Nucleic acid-binding proteins"/>
    <property type="match status" value="1"/>
</dbReference>
<dbReference type="SUPFAM" id="SSF52540">
    <property type="entry name" value="P-loop containing nucleoside triphosphate hydrolases"/>
    <property type="match status" value="1"/>
</dbReference>
<dbReference type="PROSITE" id="PS51856">
    <property type="entry name" value="RHO_RNA_BD"/>
    <property type="match status" value="1"/>
</dbReference>
<sequence length="379" mass="43128">MTDKYGFLRSSYTNYLSSSKDVYVSQSQIRLFRIKTGDTIRGEVRTPNPKKGEKYFPLKRIFQINGRFPTSVIKRKSFKKLTPLFPNEKFQISKRKVTLSTRIVDFFSPLGKGQRGIIVAPPKTGKTTLLKEIANTIAYNHPEVYLIILLIDERPEEVTDMQRNVNGEVVYSTFDEPAEKHVKVANIVLQKAKRMVECGHDVVILLDSITRLARAYNTVSPTSGKILSGGVDSNALQKPKRFFGAARNIEYGGSLSIIATAIIETGSKMDEVIFEEFKGTGNMELQLDRKIANKRIFPAIDLNASSTRKEEFLLTKYNLNKMFLIRKLLAEMTSVEAIDFIKTRLMKTKNNQEFFKSIKSSIKSSIKSSRDRENIEKKI</sequence>
<feature type="chain" id="PRO_0000398675" description="Transcription termination factor Rho">
    <location>
        <begin position="1"/>
        <end position="379"/>
    </location>
</feature>
<feature type="domain" description="Rho RNA-BD" evidence="2">
    <location>
        <begin position="1"/>
        <end position="68"/>
    </location>
</feature>
<feature type="binding site" evidence="1">
    <location>
        <begin position="111"/>
        <end position="116"/>
    </location>
    <ligand>
        <name>ATP</name>
        <dbReference type="ChEBI" id="CHEBI:30616"/>
    </ligand>
</feature>
<feature type="binding site" evidence="1">
    <location>
        <begin position="123"/>
        <end position="128"/>
    </location>
    <ligand>
        <name>ATP</name>
        <dbReference type="ChEBI" id="CHEBI:30616"/>
    </ligand>
</feature>
<feature type="binding site" evidence="1">
    <location>
        <position position="154"/>
    </location>
    <ligand>
        <name>ATP</name>
        <dbReference type="ChEBI" id="CHEBI:30616"/>
    </ligand>
</feature>
<organism>
    <name type="scientific">Karelsulcia muelleri (strain SMDSEM)</name>
    <name type="common">Sulcia muelleri</name>
    <dbReference type="NCBI Taxonomy" id="595499"/>
    <lineage>
        <taxon>Bacteria</taxon>
        <taxon>Pseudomonadati</taxon>
        <taxon>Bacteroidota</taxon>
        <taxon>Flavobacteriia</taxon>
        <taxon>Flavobacteriales</taxon>
        <taxon>Candidatus Karelsulcia</taxon>
    </lineage>
</organism>
<accession>C7LJY3</accession>
<protein>
    <recommendedName>
        <fullName evidence="1">Transcription termination factor Rho</fullName>
        <ecNumber evidence="1">3.6.4.-</ecNumber>
    </recommendedName>
    <alternativeName>
        <fullName evidence="1">ATP-dependent helicase Rho</fullName>
    </alternativeName>
</protein>
<comment type="function">
    <text evidence="1">Facilitates transcription termination by a mechanism that involves Rho binding to the nascent RNA, activation of Rho's RNA-dependent ATPase activity, and release of the mRNA from the DNA template.</text>
</comment>
<comment type="subunit">
    <text evidence="1">Homohexamer. The homohexamer assembles into an open ring structure.</text>
</comment>
<comment type="similarity">
    <text evidence="1">Belongs to the Rho family.</text>
</comment>